<dbReference type="EMBL" id="CP001114">
    <property type="protein sequence ID" value="ACO46866.1"/>
    <property type="molecule type" value="Genomic_DNA"/>
</dbReference>
<dbReference type="RefSeq" id="WP_012693988.1">
    <property type="nucleotide sequence ID" value="NC_012526.1"/>
</dbReference>
<dbReference type="SMR" id="C1CXE9"/>
<dbReference type="STRING" id="546414.Deide_18780"/>
<dbReference type="PaxDb" id="546414-Deide_18780"/>
<dbReference type="KEGG" id="ddr:Deide_18780"/>
<dbReference type="eggNOG" id="COG0098">
    <property type="taxonomic scope" value="Bacteria"/>
</dbReference>
<dbReference type="HOGENOM" id="CLU_065898_2_2_0"/>
<dbReference type="OrthoDB" id="9809045at2"/>
<dbReference type="Proteomes" id="UP000002208">
    <property type="component" value="Chromosome"/>
</dbReference>
<dbReference type="GO" id="GO:0015935">
    <property type="term" value="C:small ribosomal subunit"/>
    <property type="evidence" value="ECO:0007669"/>
    <property type="project" value="InterPro"/>
</dbReference>
<dbReference type="GO" id="GO:0019843">
    <property type="term" value="F:rRNA binding"/>
    <property type="evidence" value="ECO:0007669"/>
    <property type="project" value="UniProtKB-UniRule"/>
</dbReference>
<dbReference type="GO" id="GO:0003735">
    <property type="term" value="F:structural constituent of ribosome"/>
    <property type="evidence" value="ECO:0007669"/>
    <property type="project" value="InterPro"/>
</dbReference>
<dbReference type="GO" id="GO:0006412">
    <property type="term" value="P:translation"/>
    <property type="evidence" value="ECO:0007669"/>
    <property type="project" value="UniProtKB-UniRule"/>
</dbReference>
<dbReference type="FunFam" id="3.30.160.20:FF:000066">
    <property type="entry name" value="30S ribosomal protein S5"/>
    <property type="match status" value="1"/>
</dbReference>
<dbReference type="FunFam" id="3.30.230.10:FF:000002">
    <property type="entry name" value="30S ribosomal protein S5"/>
    <property type="match status" value="1"/>
</dbReference>
<dbReference type="Gene3D" id="3.30.160.20">
    <property type="match status" value="1"/>
</dbReference>
<dbReference type="Gene3D" id="3.30.230.10">
    <property type="match status" value="1"/>
</dbReference>
<dbReference type="HAMAP" id="MF_01307_B">
    <property type="entry name" value="Ribosomal_uS5_B"/>
    <property type="match status" value="1"/>
</dbReference>
<dbReference type="InterPro" id="IPR020568">
    <property type="entry name" value="Ribosomal_Su5_D2-typ_SF"/>
</dbReference>
<dbReference type="InterPro" id="IPR000851">
    <property type="entry name" value="Ribosomal_uS5"/>
</dbReference>
<dbReference type="InterPro" id="IPR005712">
    <property type="entry name" value="Ribosomal_uS5_bac-type"/>
</dbReference>
<dbReference type="InterPro" id="IPR005324">
    <property type="entry name" value="Ribosomal_uS5_C"/>
</dbReference>
<dbReference type="InterPro" id="IPR013810">
    <property type="entry name" value="Ribosomal_uS5_N"/>
</dbReference>
<dbReference type="InterPro" id="IPR018192">
    <property type="entry name" value="Ribosomal_uS5_N_CS"/>
</dbReference>
<dbReference type="InterPro" id="IPR014721">
    <property type="entry name" value="Ribsml_uS5_D2-typ_fold_subgr"/>
</dbReference>
<dbReference type="NCBIfam" id="TIGR01021">
    <property type="entry name" value="rpsE_bact"/>
    <property type="match status" value="1"/>
</dbReference>
<dbReference type="PANTHER" id="PTHR48277">
    <property type="entry name" value="MITOCHONDRIAL RIBOSOMAL PROTEIN S5"/>
    <property type="match status" value="1"/>
</dbReference>
<dbReference type="PANTHER" id="PTHR48277:SF1">
    <property type="entry name" value="MITOCHONDRIAL RIBOSOMAL PROTEIN S5"/>
    <property type="match status" value="1"/>
</dbReference>
<dbReference type="Pfam" id="PF00333">
    <property type="entry name" value="Ribosomal_S5"/>
    <property type="match status" value="1"/>
</dbReference>
<dbReference type="Pfam" id="PF03719">
    <property type="entry name" value="Ribosomal_S5_C"/>
    <property type="match status" value="1"/>
</dbReference>
<dbReference type="SUPFAM" id="SSF54768">
    <property type="entry name" value="dsRNA-binding domain-like"/>
    <property type="match status" value="1"/>
</dbReference>
<dbReference type="SUPFAM" id="SSF54211">
    <property type="entry name" value="Ribosomal protein S5 domain 2-like"/>
    <property type="match status" value="1"/>
</dbReference>
<dbReference type="PROSITE" id="PS00585">
    <property type="entry name" value="RIBOSOMAL_S5"/>
    <property type="match status" value="1"/>
</dbReference>
<dbReference type="PROSITE" id="PS50881">
    <property type="entry name" value="S5_DSRBD"/>
    <property type="match status" value="1"/>
</dbReference>
<reference key="1">
    <citation type="journal article" date="2009" name="PLoS Genet.">
        <title>Alliance of proteomics and genomics to unravel the specificities of Sahara bacterium Deinococcus deserti.</title>
        <authorList>
            <person name="de Groot A."/>
            <person name="Dulermo R."/>
            <person name="Ortet P."/>
            <person name="Blanchard L."/>
            <person name="Guerin P."/>
            <person name="Fernandez B."/>
            <person name="Vacherie B."/>
            <person name="Dossat C."/>
            <person name="Jolivet E."/>
            <person name="Siguier P."/>
            <person name="Chandler M."/>
            <person name="Barakat M."/>
            <person name="Dedieu A."/>
            <person name="Barbe V."/>
            <person name="Heulin T."/>
            <person name="Sommer S."/>
            <person name="Achouak W."/>
            <person name="Armengaud J."/>
        </authorList>
    </citation>
    <scope>NUCLEOTIDE SEQUENCE [LARGE SCALE GENOMIC DNA]</scope>
    <source>
        <strain>DSM 17065 / CIP 109153 / LMG 22923 / VCD115</strain>
    </source>
</reference>
<accession>C1CXE9</accession>
<organism>
    <name type="scientific">Deinococcus deserti (strain DSM 17065 / CIP 109153 / LMG 22923 / VCD115)</name>
    <dbReference type="NCBI Taxonomy" id="546414"/>
    <lineage>
        <taxon>Bacteria</taxon>
        <taxon>Thermotogati</taxon>
        <taxon>Deinococcota</taxon>
        <taxon>Deinococci</taxon>
        <taxon>Deinococcales</taxon>
        <taxon>Deinococcaceae</taxon>
        <taxon>Deinococcus</taxon>
    </lineage>
</organism>
<proteinExistence type="inferred from homology"/>
<evidence type="ECO:0000255" key="1">
    <source>
        <dbReference type="HAMAP-Rule" id="MF_01307"/>
    </source>
</evidence>
<evidence type="ECO:0000305" key="2"/>
<sequence>MTFNRRNDRNVERETSEFEEKMLFVNRTSKTYQGGRRFRFAALVILGDRNGRVGMGIGKAKEVPVAIEKAKSIARKNMISVPVENGTIPHEIVGVNSTSRVLLKPAGPGTGVIAGTVPRSIAELAGITNMLSKELGSRNKVNVAYAVFDGFKNLRTAKQVRALRGIEAAPVTGGAQ</sequence>
<feature type="chain" id="PRO_1000214317" description="Small ribosomal subunit protein uS5">
    <location>
        <begin position="1"/>
        <end position="176"/>
    </location>
</feature>
<feature type="domain" description="S5 DRBM" evidence="1">
    <location>
        <begin position="18"/>
        <end position="81"/>
    </location>
</feature>
<comment type="function">
    <text evidence="1">With S4 and S12 plays an important role in translational accuracy.</text>
</comment>
<comment type="function">
    <text evidence="1">Located at the back of the 30S subunit body where it stabilizes the conformation of the head with respect to the body.</text>
</comment>
<comment type="subunit">
    <text evidence="1">Part of the 30S ribosomal subunit. Contacts proteins S4 and S8.</text>
</comment>
<comment type="domain">
    <text>The N-terminal domain interacts with the head of the 30S subunit; the C-terminal domain interacts with the body and contacts protein S4. The interaction surface between S4 and S5 is involved in control of translational fidelity.</text>
</comment>
<comment type="similarity">
    <text evidence="1">Belongs to the universal ribosomal protein uS5 family.</text>
</comment>
<gene>
    <name evidence="1" type="primary">rpsE</name>
    <name type="ordered locus">Deide_18780</name>
</gene>
<keyword id="KW-1185">Reference proteome</keyword>
<keyword id="KW-0687">Ribonucleoprotein</keyword>
<keyword id="KW-0689">Ribosomal protein</keyword>
<keyword id="KW-0694">RNA-binding</keyword>
<keyword id="KW-0699">rRNA-binding</keyword>
<protein>
    <recommendedName>
        <fullName evidence="1">Small ribosomal subunit protein uS5</fullName>
    </recommendedName>
    <alternativeName>
        <fullName evidence="2">30S ribosomal protein S5</fullName>
    </alternativeName>
</protein>
<name>RS5_DEIDV</name>